<evidence type="ECO:0000250" key="1"/>
<evidence type="ECO:0000305" key="2"/>
<reference key="1">
    <citation type="submission" date="2005-06" db="EMBL/GenBank/DDBJ databases">
        <title>DNA sequences of macaque genes expressed in brain or testis and its evolutionary implications.</title>
        <authorList>
            <consortium name="International consortium for macaque cDNA sequencing and analysis"/>
        </authorList>
    </citation>
    <scope>NUCLEOTIDE SEQUENCE [LARGE SCALE MRNA]</scope>
    <source>
        <tissue>Testis</tissue>
    </source>
</reference>
<name>AR2BP_MACFA</name>
<accession>Q4R930</accession>
<comment type="function">
    <text evidence="1">Together with ARL2, plays a role in the nuclear translocation, retention and transcriptional activity of STAT3. May play a role as an effector of ARL2 (By similarity).</text>
</comment>
<comment type="subunit">
    <text evidence="1">Interacts with GTP bound ARL2 and ARL3; the complex ARL2-ARL2BP as well as ARL2BP alone, binds to SLC25A4/ANT1. Interaction with ARL2 may be required for cilia basal body localization (By similarity). Interacts with STAT3; interaction is enhanced with ARL2. Found in a complex with ARL2BP, ARL2 and SLC25A6. Found in a complex with ARL2, ARL2BP and SLC25A4. Interacts with STAT2, STAT3 and STAT4.</text>
</comment>
<comment type="subcellular location">
    <subcellularLocation>
        <location evidence="1">Cytoplasm</location>
    </subcellularLocation>
    <subcellularLocation>
        <location evidence="1">Mitochondrion intermembrane space</location>
    </subcellularLocation>
    <subcellularLocation>
        <location evidence="1">Cytoplasm</location>
        <location evidence="1">Cytoskeleton</location>
        <location evidence="1">Microtubule organizing center</location>
        <location evidence="1">Centrosome</location>
    </subcellularLocation>
    <subcellularLocation>
        <location evidence="1">Nucleus</location>
    </subcellularLocation>
    <subcellularLocation>
        <location evidence="1">Cytoplasm</location>
        <location evidence="1">Cytoskeleton</location>
        <location evidence="1">Spindle</location>
    </subcellularLocation>
    <subcellularLocation>
        <location evidence="1">Cytoplasm</location>
        <location evidence="1">Cytoskeleton</location>
        <location evidence="1">Cilium basal body</location>
    </subcellularLocation>
    <text evidence="1">Detected in the midbody matrix. Not detected in the Golgi, nucleus and on the mitotic spindle. Centrosome-associated throughout the cell cycle. Not detected to interphase microtubules. In retina photoreceptor cells, localized in the distal connecting cilia, basal body, ciliary-associated centriole, and ciliary rootlet. Interaction with ARL2 may be required for cilia basal body localization (By similarity). The complex formed with ARL2BP, ARL2 and SLC25A4 is expressed in mitochondria (By similarity).</text>
</comment>
<comment type="similarity">
    <text evidence="2">Belongs to the ARL2BP family.</text>
</comment>
<feature type="chain" id="PRO_0000287114" description="ADP-ribosylation factor-like protein 2-binding protein">
    <location>
        <begin position="1"/>
        <end position="163"/>
    </location>
</feature>
<gene>
    <name type="primary">ARL2BP</name>
    <name type="ORF">QtsA-10827</name>
</gene>
<dbReference type="EMBL" id="AB168267">
    <property type="protein sequence ID" value="BAE00391.1"/>
    <property type="molecule type" value="mRNA"/>
</dbReference>
<dbReference type="RefSeq" id="NP_001271553.1">
    <property type="nucleotide sequence ID" value="NM_001284624.1"/>
</dbReference>
<dbReference type="RefSeq" id="XP_045238725.1">
    <property type="nucleotide sequence ID" value="XM_045382790.2"/>
</dbReference>
<dbReference type="BMRB" id="Q4R930"/>
<dbReference type="SMR" id="Q4R930"/>
<dbReference type="STRING" id="9541.ENSMFAP00000006038"/>
<dbReference type="Ensembl" id="ENSMFAT00000024718.2">
    <property type="protein sequence ID" value="ENSMFAP00000006038.1"/>
    <property type="gene ID" value="ENSMFAG00000002659.2"/>
</dbReference>
<dbReference type="GeneID" id="101867164"/>
<dbReference type="VEuPathDB" id="HostDB:ENSMFAG00000002659"/>
<dbReference type="eggNOG" id="ENOG502RYJD">
    <property type="taxonomic scope" value="Eukaryota"/>
</dbReference>
<dbReference type="GeneTree" id="ENSGT00390000015052"/>
<dbReference type="OMA" id="CILEIIM"/>
<dbReference type="Proteomes" id="UP000233100">
    <property type="component" value="Chromosome 20"/>
</dbReference>
<dbReference type="Bgee" id="ENSMFAG00000002659">
    <property type="expression patterns" value="Expressed in skeletal muscle tissue and 13 other cell types or tissues"/>
</dbReference>
<dbReference type="GO" id="GO:0005813">
    <property type="term" value="C:centrosome"/>
    <property type="evidence" value="ECO:0007669"/>
    <property type="project" value="UniProtKB-SubCell"/>
</dbReference>
<dbReference type="GO" id="GO:0036064">
    <property type="term" value="C:ciliary basal body"/>
    <property type="evidence" value="ECO:0007669"/>
    <property type="project" value="Ensembl"/>
</dbReference>
<dbReference type="GO" id="GO:0005829">
    <property type="term" value="C:cytosol"/>
    <property type="evidence" value="ECO:0007669"/>
    <property type="project" value="Ensembl"/>
</dbReference>
<dbReference type="GO" id="GO:0030496">
    <property type="term" value="C:midbody"/>
    <property type="evidence" value="ECO:0007669"/>
    <property type="project" value="Ensembl"/>
</dbReference>
<dbReference type="GO" id="GO:0005758">
    <property type="term" value="C:mitochondrial intermembrane space"/>
    <property type="evidence" value="ECO:0007669"/>
    <property type="project" value="UniProtKB-SubCell"/>
</dbReference>
<dbReference type="GO" id="GO:0005654">
    <property type="term" value="C:nucleoplasm"/>
    <property type="evidence" value="ECO:0007669"/>
    <property type="project" value="Ensembl"/>
</dbReference>
<dbReference type="GO" id="GO:0005819">
    <property type="term" value="C:spindle"/>
    <property type="evidence" value="ECO:0007669"/>
    <property type="project" value="UniProtKB-SubCell"/>
</dbReference>
<dbReference type="GO" id="GO:0003713">
    <property type="term" value="F:transcription coactivator activity"/>
    <property type="evidence" value="ECO:0000250"/>
    <property type="project" value="UniProtKB"/>
</dbReference>
<dbReference type="GO" id="GO:0051457">
    <property type="term" value="P:maintenance of protein location in nucleus"/>
    <property type="evidence" value="ECO:0000250"/>
    <property type="project" value="UniProtKB"/>
</dbReference>
<dbReference type="GO" id="GO:0042531">
    <property type="term" value="P:positive regulation of tyrosine phosphorylation of STAT protein"/>
    <property type="evidence" value="ECO:0000250"/>
    <property type="project" value="UniProtKB"/>
</dbReference>
<dbReference type="FunFam" id="1.20.1520.10:FF:000002">
    <property type="entry name" value="ADP-ribosylation factor-like protein 2-binding protein isoform X1"/>
    <property type="match status" value="1"/>
</dbReference>
<dbReference type="Gene3D" id="1.20.1520.10">
    <property type="entry name" value="ADP-ribosylation factor-like 2-binding protein, domain"/>
    <property type="match status" value="1"/>
</dbReference>
<dbReference type="InterPro" id="IPR038849">
    <property type="entry name" value="ARL2BP"/>
</dbReference>
<dbReference type="InterPro" id="IPR023379">
    <property type="entry name" value="BART_dom"/>
</dbReference>
<dbReference type="InterPro" id="IPR042541">
    <property type="entry name" value="BART_sf"/>
</dbReference>
<dbReference type="PANTHER" id="PTHR15487">
    <property type="entry name" value="ADP-RIBOSYLATION FACTOR-LIKE PROTEIN 2-BINDING PROTEIN"/>
    <property type="match status" value="1"/>
</dbReference>
<dbReference type="PANTHER" id="PTHR15487:SF4">
    <property type="entry name" value="ADP-RIBOSYLATION FACTOR-LIKE PROTEIN 2-BINDING PROTEIN"/>
    <property type="match status" value="1"/>
</dbReference>
<dbReference type="Pfam" id="PF11527">
    <property type="entry name" value="ARL2_Bind_BART"/>
    <property type="match status" value="1"/>
</dbReference>
<organism>
    <name type="scientific">Macaca fascicularis</name>
    <name type="common">Crab-eating macaque</name>
    <name type="synonym">Cynomolgus monkey</name>
    <dbReference type="NCBI Taxonomy" id="9541"/>
    <lineage>
        <taxon>Eukaryota</taxon>
        <taxon>Metazoa</taxon>
        <taxon>Chordata</taxon>
        <taxon>Craniata</taxon>
        <taxon>Vertebrata</taxon>
        <taxon>Euteleostomi</taxon>
        <taxon>Mammalia</taxon>
        <taxon>Eutheria</taxon>
        <taxon>Euarchontoglires</taxon>
        <taxon>Primates</taxon>
        <taxon>Haplorrhini</taxon>
        <taxon>Catarrhini</taxon>
        <taxon>Cercopithecidae</taxon>
        <taxon>Cercopithecinae</taxon>
        <taxon>Macaca</taxon>
    </lineage>
</organism>
<sequence length="163" mass="18786">MDALEEESFALSFSSASDAEFDAVVGYLEDIIMDDEFQLLQRNFMDKYYLEFEDTEENKLTYTPIFNEYISLVEKYIEEQLLQRIPGFNMAAFTTTLQHHKDEVAGDIFDMLLTFTDFLAFKEMFLDYRAEKEGRGLDLSSGLVVTSLCKSSSVSASQNNLRH</sequence>
<keyword id="KW-0966">Cell projection</keyword>
<keyword id="KW-0969">Cilium</keyword>
<keyword id="KW-0963">Cytoplasm</keyword>
<keyword id="KW-0206">Cytoskeleton</keyword>
<keyword id="KW-0496">Mitochondrion</keyword>
<keyword id="KW-0539">Nucleus</keyword>
<keyword id="KW-1185">Reference proteome</keyword>
<protein>
    <recommendedName>
        <fullName>ADP-ribosylation factor-like protein 2-binding protein</fullName>
        <shortName>ARF-like 2-binding protein</shortName>
    </recommendedName>
</protein>
<proteinExistence type="evidence at transcript level"/>